<reference key="1">
    <citation type="journal article" date="2014" name="Stand. Genomic Sci.">
        <title>Complete genome sequence of Burkholderia phymatum STM815(T), a broad host range and efficient nitrogen-fixing symbiont of Mimosa species.</title>
        <authorList>
            <person name="Moulin L."/>
            <person name="Klonowska A."/>
            <person name="Caroline B."/>
            <person name="Booth K."/>
            <person name="Vriezen J.A."/>
            <person name="Melkonian R."/>
            <person name="James E.K."/>
            <person name="Young J.P."/>
            <person name="Bena G."/>
            <person name="Hauser L."/>
            <person name="Land M."/>
            <person name="Kyrpides N."/>
            <person name="Bruce D."/>
            <person name="Chain P."/>
            <person name="Copeland A."/>
            <person name="Pitluck S."/>
            <person name="Woyke T."/>
            <person name="Lizotte-Waniewski M."/>
            <person name="Bristow J."/>
            <person name="Riley M."/>
        </authorList>
    </citation>
    <scope>NUCLEOTIDE SEQUENCE [LARGE SCALE GENOMIC DNA]</scope>
    <source>
        <strain>DSM 17167 / CIP 108236 / LMG 21445 / STM815</strain>
    </source>
</reference>
<organism>
    <name type="scientific">Paraburkholderia phymatum (strain DSM 17167 / CIP 108236 / LMG 21445 / STM815)</name>
    <name type="common">Burkholderia phymatum</name>
    <dbReference type="NCBI Taxonomy" id="391038"/>
    <lineage>
        <taxon>Bacteria</taxon>
        <taxon>Pseudomonadati</taxon>
        <taxon>Pseudomonadota</taxon>
        <taxon>Betaproteobacteria</taxon>
        <taxon>Burkholderiales</taxon>
        <taxon>Burkholderiaceae</taxon>
        <taxon>Paraburkholderia</taxon>
    </lineage>
</organism>
<comment type="catalytic activity">
    <reaction evidence="1">
        <text>acetaldehyde + NAD(+) + CoA = acetyl-CoA + NADH + H(+)</text>
        <dbReference type="Rhea" id="RHEA:23288"/>
        <dbReference type="ChEBI" id="CHEBI:15343"/>
        <dbReference type="ChEBI" id="CHEBI:15378"/>
        <dbReference type="ChEBI" id="CHEBI:57287"/>
        <dbReference type="ChEBI" id="CHEBI:57288"/>
        <dbReference type="ChEBI" id="CHEBI:57540"/>
        <dbReference type="ChEBI" id="CHEBI:57945"/>
        <dbReference type="EC" id="1.2.1.10"/>
    </reaction>
</comment>
<comment type="similarity">
    <text evidence="1">Belongs to the acetaldehyde dehydrogenase family.</text>
</comment>
<accession>B2JLM7</accession>
<gene>
    <name type="ordered locus">Bphy_3511</name>
</gene>
<dbReference type="EC" id="1.2.1.10" evidence="1"/>
<dbReference type="EMBL" id="CP001044">
    <property type="protein sequence ID" value="ACC72660.1"/>
    <property type="molecule type" value="Genomic_DNA"/>
</dbReference>
<dbReference type="RefSeq" id="WP_012402833.1">
    <property type="nucleotide sequence ID" value="NC_010623.1"/>
</dbReference>
<dbReference type="SMR" id="B2JLM7"/>
<dbReference type="STRING" id="391038.Bphy_3511"/>
<dbReference type="KEGG" id="bph:Bphy_3511"/>
<dbReference type="eggNOG" id="COG4569">
    <property type="taxonomic scope" value="Bacteria"/>
</dbReference>
<dbReference type="HOGENOM" id="CLU_062208_0_0_4"/>
<dbReference type="OrthoDB" id="9786743at2"/>
<dbReference type="Proteomes" id="UP000001192">
    <property type="component" value="Chromosome 2"/>
</dbReference>
<dbReference type="GO" id="GO:0008774">
    <property type="term" value="F:acetaldehyde dehydrogenase (acetylating) activity"/>
    <property type="evidence" value="ECO:0007669"/>
    <property type="project" value="UniProtKB-UniRule"/>
</dbReference>
<dbReference type="GO" id="GO:0051287">
    <property type="term" value="F:NAD binding"/>
    <property type="evidence" value="ECO:0007669"/>
    <property type="project" value="UniProtKB-UniRule"/>
</dbReference>
<dbReference type="GO" id="GO:0009056">
    <property type="term" value="P:catabolic process"/>
    <property type="evidence" value="ECO:0007669"/>
    <property type="project" value="UniProtKB-KW"/>
</dbReference>
<dbReference type="CDD" id="cd23933">
    <property type="entry name" value="ALDH_C"/>
    <property type="match status" value="1"/>
</dbReference>
<dbReference type="Gene3D" id="3.30.360.10">
    <property type="entry name" value="Dihydrodipicolinate Reductase, domain 2"/>
    <property type="match status" value="1"/>
</dbReference>
<dbReference type="Gene3D" id="3.40.50.720">
    <property type="entry name" value="NAD(P)-binding Rossmann-like Domain"/>
    <property type="match status" value="1"/>
</dbReference>
<dbReference type="HAMAP" id="MF_01657">
    <property type="entry name" value="Ac_ald_DH_ac"/>
    <property type="match status" value="1"/>
</dbReference>
<dbReference type="InterPro" id="IPR003361">
    <property type="entry name" value="Acetaldehyde_dehydrogenase"/>
</dbReference>
<dbReference type="InterPro" id="IPR015426">
    <property type="entry name" value="Acetylaldehyde_DH_C"/>
</dbReference>
<dbReference type="InterPro" id="IPR036291">
    <property type="entry name" value="NAD(P)-bd_dom_sf"/>
</dbReference>
<dbReference type="InterPro" id="IPR000534">
    <property type="entry name" value="Semialdehyde_DH_NAD-bd"/>
</dbReference>
<dbReference type="NCBIfam" id="TIGR03215">
    <property type="entry name" value="ac_ald_DH_ac"/>
    <property type="match status" value="1"/>
</dbReference>
<dbReference type="NCBIfam" id="NF006157">
    <property type="entry name" value="PRK08300.1"/>
    <property type="match status" value="1"/>
</dbReference>
<dbReference type="Pfam" id="PF09290">
    <property type="entry name" value="AcetDehyd-dimer"/>
    <property type="match status" value="1"/>
</dbReference>
<dbReference type="Pfam" id="PF01118">
    <property type="entry name" value="Semialdhyde_dh"/>
    <property type="match status" value="1"/>
</dbReference>
<dbReference type="PIRSF" id="PIRSF015689">
    <property type="entry name" value="Actaldh_dh_actl"/>
    <property type="match status" value="1"/>
</dbReference>
<dbReference type="SMART" id="SM00859">
    <property type="entry name" value="Semialdhyde_dh"/>
    <property type="match status" value="1"/>
</dbReference>
<dbReference type="SUPFAM" id="SSF55347">
    <property type="entry name" value="Glyceraldehyde-3-phosphate dehydrogenase-like, C-terminal domain"/>
    <property type="match status" value="1"/>
</dbReference>
<dbReference type="SUPFAM" id="SSF51735">
    <property type="entry name" value="NAD(P)-binding Rossmann-fold domains"/>
    <property type="match status" value="1"/>
</dbReference>
<name>ACDH1_PARP8</name>
<protein>
    <recommendedName>
        <fullName evidence="1">Acetaldehyde dehydrogenase 1</fullName>
        <ecNumber evidence="1">1.2.1.10</ecNumber>
    </recommendedName>
    <alternativeName>
        <fullName evidence="1">Acetaldehyde dehydrogenase [acetylating] 1</fullName>
    </alternativeName>
</protein>
<keyword id="KW-0058">Aromatic hydrocarbons catabolism</keyword>
<keyword id="KW-0520">NAD</keyword>
<keyword id="KW-0560">Oxidoreductase</keyword>
<keyword id="KW-1185">Reference proteome</keyword>
<evidence type="ECO:0000255" key="1">
    <source>
        <dbReference type="HAMAP-Rule" id="MF_01657"/>
    </source>
</evidence>
<feature type="chain" id="PRO_0000387632" description="Acetaldehyde dehydrogenase 1">
    <location>
        <begin position="1"/>
        <end position="315"/>
    </location>
</feature>
<feature type="active site" description="Acyl-thioester intermediate" evidence="1">
    <location>
        <position position="132"/>
    </location>
</feature>
<feature type="binding site" evidence="1">
    <location>
        <begin position="12"/>
        <end position="15"/>
    </location>
    <ligand>
        <name>NAD(+)</name>
        <dbReference type="ChEBI" id="CHEBI:57540"/>
    </ligand>
</feature>
<feature type="binding site" evidence="1">
    <location>
        <begin position="163"/>
        <end position="171"/>
    </location>
    <ligand>
        <name>NAD(+)</name>
        <dbReference type="ChEBI" id="CHEBI:57540"/>
    </ligand>
</feature>
<feature type="binding site" evidence="1">
    <location>
        <position position="291"/>
    </location>
    <ligand>
        <name>NAD(+)</name>
        <dbReference type="ChEBI" id="CHEBI:57540"/>
    </ligand>
</feature>
<proteinExistence type="inferred from homology"/>
<sequence length="315" mass="33735">MKRKLKVAIIGSGNIGTDLMIKILRHGEHIEMGAMVGIDAASDGLQRAARLGVVTTHEGVEGLSRMPVFADIDIVFDATSASAHTRNDAFLRAIKPGIRFVDLTPAAIGPYCIPVVNGERHLDAPNVNMVTCGGQATIPMVAAVSRVARVRYAEIVASISSRSAGPGTRANIDEFTETTSRAIEVVGGAAVGKAIIVLNPAEPPLIMRDTVYTLSEFVDERQIEESVTRMAEAVQTYVPGYRLKQRVQFDRIDADGPIRIPGISDRMVGLKTSIYLEIEGAAHYLPAYAGNLDIMTSAAKVTAEGVANRLLANKK</sequence>